<sequence length="468" mass="51700">MTERAGLRLHDTAAGAVRDFVPLREGHVSIYLCGATVQGLPHIGHVRSGVAFDILRRWLMARGFDVAFIRNVTDIDDKILNKAAAAERPWWEWAATYERAFTAAYDALDVLPPSAEPRATGHVTQMVELIERLIERGHAYAGGGDVYFDVLSYPDYGQLSGHKVDDVHQGEGVATGKRDQRDFTLWKGAKPGEPSWPTPWGRGRPGWHLECSAMARTYLGAQFDIHCGGMDLIFPHHENEIAQSRAAGDGFARYWLHNGWVTMGGEKMSKSLGNVLAIPTMLQRVRPAELRYYLGSAHYRSILEFSDIALQDAVNAYVGVEEFLHRVRSRVGAVVVGDWTPRFAAALDDDLSVPIALAEIHHIRAEGNRALDAGDHDAALQSASSIRALMGILGCDPLDERWESRDETSAALAAVDVLVQAELENRQKAREERNWALADEIRNRLKNAGIEVTDTADGPQWLLGGDGK</sequence>
<accession>A0PV27</accession>
<organism>
    <name type="scientific">Mycobacterium ulcerans (strain Agy99)</name>
    <dbReference type="NCBI Taxonomy" id="362242"/>
    <lineage>
        <taxon>Bacteria</taxon>
        <taxon>Bacillati</taxon>
        <taxon>Actinomycetota</taxon>
        <taxon>Actinomycetes</taxon>
        <taxon>Mycobacteriales</taxon>
        <taxon>Mycobacteriaceae</taxon>
        <taxon>Mycobacterium</taxon>
        <taxon>Mycobacterium ulcerans group</taxon>
    </lineage>
</organism>
<proteinExistence type="inferred from homology"/>
<gene>
    <name evidence="1" type="primary">cysS</name>
    <name type="ordered locus">MUL_4156</name>
</gene>
<evidence type="ECO:0000255" key="1">
    <source>
        <dbReference type="HAMAP-Rule" id="MF_00041"/>
    </source>
</evidence>
<reference key="1">
    <citation type="journal article" date="2007" name="Genome Res.">
        <title>Reductive evolution and niche adaptation inferred from the genome of Mycobacterium ulcerans, the causative agent of Buruli ulcer.</title>
        <authorList>
            <person name="Stinear T.P."/>
            <person name="Seemann T."/>
            <person name="Pidot S."/>
            <person name="Frigui W."/>
            <person name="Reysset G."/>
            <person name="Garnier T."/>
            <person name="Meurice G."/>
            <person name="Simon D."/>
            <person name="Bouchier C."/>
            <person name="Ma L."/>
            <person name="Tichit M."/>
            <person name="Porter J.L."/>
            <person name="Ryan J."/>
            <person name="Johnson P.D.R."/>
            <person name="Davies J.K."/>
            <person name="Jenkin G.A."/>
            <person name="Small P.L.C."/>
            <person name="Jones L.M."/>
            <person name="Tekaia F."/>
            <person name="Laval F."/>
            <person name="Daffe M."/>
            <person name="Parkhill J."/>
            <person name="Cole S.T."/>
        </authorList>
    </citation>
    <scope>NUCLEOTIDE SEQUENCE [LARGE SCALE GENOMIC DNA]</scope>
    <source>
        <strain>Agy99</strain>
    </source>
</reference>
<comment type="catalytic activity">
    <reaction evidence="1">
        <text>tRNA(Cys) + L-cysteine + ATP = L-cysteinyl-tRNA(Cys) + AMP + diphosphate</text>
        <dbReference type="Rhea" id="RHEA:17773"/>
        <dbReference type="Rhea" id="RHEA-COMP:9661"/>
        <dbReference type="Rhea" id="RHEA-COMP:9679"/>
        <dbReference type="ChEBI" id="CHEBI:30616"/>
        <dbReference type="ChEBI" id="CHEBI:33019"/>
        <dbReference type="ChEBI" id="CHEBI:35235"/>
        <dbReference type="ChEBI" id="CHEBI:78442"/>
        <dbReference type="ChEBI" id="CHEBI:78517"/>
        <dbReference type="ChEBI" id="CHEBI:456215"/>
        <dbReference type="EC" id="6.1.1.16"/>
    </reaction>
</comment>
<comment type="cofactor">
    <cofactor evidence="1">
        <name>Zn(2+)</name>
        <dbReference type="ChEBI" id="CHEBI:29105"/>
    </cofactor>
    <text evidence="1">Binds 1 zinc ion per subunit.</text>
</comment>
<comment type="subunit">
    <text evidence="1">Monomer.</text>
</comment>
<comment type="subcellular location">
    <subcellularLocation>
        <location evidence="1">Cytoplasm</location>
    </subcellularLocation>
</comment>
<comment type="similarity">
    <text evidence="1">Belongs to the class-I aminoacyl-tRNA synthetase family.</text>
</comment>
<dbReference type="EC" id="6.1.1.16" evidence="1"/>
<dbReference type="EMBL" id="CP000325">
    <property type="protein sequence ID" value="ABL06196.1"/>
    <property type="molecule type" value="Genomic_DNA"/>
</dbReference>
<dbReference type="RefSeq" id="WP_011741800.1">
    <property type="nucleotide sequence ID" value="NC_008611.1"/>
</dbReference>
<dbReference type="SMR" id="A0PV27"/>
<dbReference type="KEGG" id="mul:MUL_4156"/>
<dbReference type="eggNOG" id="COG0215">
    <property type="taxonomic scope" value="Bacteria"/>
</dbReference>
<dbReference type="HOGENOM" id="CLU_013528_0_1_11"/>
<dbReference type="Proteomes" id="UP000000765">
    <property type="component" value="Chromosome"/>
</dbReference>
<dbReference type="GO" id="GO:0005829">
    <property type="term" value="C:cytosol"/>
    <property type="evidence" value="ECO:0007669"/>
    <property type="project" value="TreeGrafter"/>
</dbReference>
<dbReference type="GO" id="GO:0005524">
    <property type="term" value="F:ATP binding"/>
    <property type="evidence" value="ECO:0007669"/>
    <property type="project" value="UniProtKB-UniRule"/>
</dbReference>
<dbReference type="GO" id="GO:0004817">
    <property type="term" value="F:cysteine-tRNA ligase activity"/>
    <property type="evidence" value="ECO:0007669"/>
    <property type="project" value="UniProtKB-UniRule"/>
</dbReference>
<dbReference type="GO" id="GO:0008270">
    <property type="term" value="F:zinc ion binding"/>
    <property type="evidence" value="ECO:0007669"/>
    <property type="project" value="UniProtKB-UniRule"/>
</dbReference>
<dbReference type="GO" id="GO:0006423">
    <property type="term" value="P:cysteinyl-tRNA aminoacylation"/>
    <property type="evidence" value="ECO:0007669"/>
    <property type="project" value="UniProtKB-UniRule"/>
</dbReference>
<dbReference type="CDD" id="cd00672">
    <property type="entry name" value="CysRS_core"/>
    <property type="match status" value="1"/>
</dbReference>
<dbReference type="FunFam" id="3.40.50.620:FF:000068">
    <property type="entry name" value="Cysteine--tRNA ligase"/>
    <property type="match status" value="1"/>
</dbReference>
<dbReference type="Gene3D" id="1.20.120.1910">
    <property type="entry name" value="Cysteine-tRNA ligase, C-terminal anti-codon recognition domain"/>
    <property type="match status" value="1"/>
</dbReference>
<dbReference type="Gene3D" id="3.40.50.620">
    <property type="entry name" value="HUPs"/>
    <property type="match status" value="1"/>
</dbReference>
<dbReference type="HAMAP" id="MF_00041">
    <property type="entry name" value="Cys_tRNA_synth"/>
    <property type="match status" value="1"/>
</dbReference>
<dbReference type="InterPro" id="IPR015803">
    <property type="entry name" value="Cys-tRNA-ligase"/>
</dbReference>
<dbReference type="InterPro" id="IPR015273">
    <property type="entry name" value="Cys-tRNA-synt_Ia_DALR"/>
</dbReference>
<dbReference type="InterPro" id="IPR024909">
    <property type="entry name" value="Cys-tRNA/MSH_ligase"/>
</dbReference>
<dbReference type="InterPro" id="IPR014729">
    <property type="entry name" value="Rossmann-like_a/b/a_fold"/>
</dbReference>
<dbReference type="InterPro" id="IPR032678">
    <property type="entry name" value="tRNA-synt_1_cat_dom"/>
</dbReference>
<dbReference type="InterPro" id="IPR009080">
    <property type="entry name" value="tRNAsynth_Ia_anticodon-bd"/>
</dbReference>
<dbReference type="NCBIfam" id="TIGR00435">
    <property type="entry name" value="cysS"/>
    <property type="match status" value="1"/>
</dbReference>
<dbReference type="PANTHER" id="PTHR10890:SF30">
    <property type="entry name" value="CYSTEINE--TRNA LIGASE"/>
    <property type="match status" value="1"/>
</dbReference>
<dbReference type="PANTHER" id="PTHR10890">
    <property type="entry name" value="CYSTEINYL-TRNA SYNTHETASE"/>
    <property type="match status" value="1"/>
</dbReference>
<dbReference type="Pfam" id="PF09190">
    <property type="entry name" value="DALR_2"/>
    <property type="match status" value="1"/>
</dbReference>
<dbReference type="Pfam" id="PF01406">
    <property type="entry name" value="tRNA-synt_1e"/>
    <property type="match status" value="1"/>
</dbReference>
<dbReference type="PRINTS" id="PR00983">
    <property type="entry name" value="TRNASYNTHCYS"/>
</dbReference>
<dbReference type="SMART" id="SM00840">
    <property type="entry name" value="DALR_2"/>
    <property type="match status" value="1"/>
</dbReference>
<dbReference type="SUPFAM" id="SSF47323">
    <property type="entry name" value="Anticodon-binding domain of a subclass of class I aminoacyl-tRNA synthetases"/>
    <property type="match status" value="1"/>
</dbReference>
<dbReference type="SUPFAM" id="SSF52374">
    <property type="entry name" value="Nucleotidylyl transferase"/>
    <property type="match status" value="1"/>
</dbReference>
<keyword id="KW-0030">Aminoacyl-tRNA synthetase</keyword>
<keyword id="KW-0067">ATP-binding</keyword>
<keyword id="KW-0963">Cytoplasm</keyword>
<keyword id="KW-0436">Ligase</keyword>
<keyword id="KW-0479">Metal-binding</keyword>
<keyword id="KW-0547">Nucleotide-binding</keyword>
<keyword id="KW-0648">Protein biosynthesis</keyword>
<keyword id="KW-0862">Zinc</keyword>
<feature type="chain" id="PRO_1000006597" description="Cysteine--tRNA ligase">
    <location>
        <begin position="1"/>
        <end position="468"/>
    </location>
</feature>
<feature type="short sequence motif" description="'HIGH' region">
    <location>
        <begin position="35"/>
        <end position="45"/>
    </location>
</feature>
<feature type="short sequence motif" description="'KMSKS' region">
    <location>
        <begin position="267"/>
        <end position="271"/>
    </location>
</feature>
<feature type="binding site" evidence="1">
    <location>
        <position position="33"/>
    </location>
    <ligand>
        <name>Zn(2+)</name>
        <dbReference type="ChEBI" id="CHEBI:29105"/>
    </ligand>
</feature>
<feature type="binding site" evidence="1">
    <location>
        <position position="211"/>
    </location>
    <ligand>
        <name>Zn(2+)</name>
        <dbReference type="ChEBI" id="CHEBI:29105"/>
    </ligand>
</feature>
<feature type="binding site" evidence="1">
    <location>
        <position position="236"/>
    </location>
    <ligand>
        <name>Zn(2+)</name>
        <dbReference type="ChEBI" id="CHEBI:29105"/>
    </ligand>
</feature>
<feature type="binding site" evidence="1">
    <location>
        <position position="240"/>
    </location>
    <ligand>
        <name>Zn(2+)</name>
        <dbReference type="ChEBI" id="CHEBI:29105"/>
    </ligand>
</feature>
<feature type="binding site" evidence="1">
    <location>
        <position position="270"/>
    </location>
    <ligand>
        <name>ATP</name>
        <dbReference type="ChEBI" id="CHEBI:30616"/>
    </ligand>
</feature>
<protein>
    <recommendedName>
        <fullName evidence="1">Cysteine--tRNA ligase</fullName>
        <ecNumber evidence="1">6.1.1.16</ecNumber>
    </recommendedName>
    <alternativeName>
        <fullName evidence="1">Cysteinyl-tRNA synthetase</fullName>
        <shortName evidence="1">CysRS</shortName>
    </alternativeName>
</protein>
<name>SYC_MYCUA</name>